<sequence>MKVSVAALSCLMLVTALGSQAQVTNDAETGFMMSKLSLANSEVLDSFHAINADCCTSYIPGSIPCSLLESYLETSSKCPKPGVIFLTKNGRRLCVSPSNKQVLACRIMLKLATRIKTRKN</sequence>
<protein>
    <recommendedName>
        <fullName>C-C motif chemokine 23</fullName>
    </recommendedName>
    <alternativeName>
        <fullName>Small-inducible cytokine A23</fullName>
    </alternativeName>
</protein>
<organism>
    <name type="scientific">Macaca mulatta</name>
    <name type="common">Rhesus macaque</name>
    <dbReference type="NCBI Taxonomy" id="9544"/>
    <lineage>
        <taxon>Eukaryota</taxon>
        <taxon>Metazoa</taxon>
        <taxon>Chordata</taxon>
        <taxon>Craniata</taxon>
        <taxon>Vertebrata</taxon>
        <taxon>Euteleostomi</taxon>
        <taxon>Mammalia</taxon>
        <taxon>Eutheria</taxon>
        <taxon>Euarchontoglires</taxon>
        <taxon>Primates</taxon>
        <taxon>Haplorrhini</taxon>
        <taxon>Catarrhini</taxon>
        <taxon>Cercopithecidae</taxon>
        <taxon>Cercopithecinae</taxon>
        <taxon>Macaca</taxon>
    </lineage>
</organism>
<accession>Q8HYP4</accession>
<dbReference type="EMBL" id="AF449276">
    <property type="protein sequence ID" value="AAN76080.1"/>
    <property type="molecule type" value="mRNA"/>
</dbReference>
<dbReference type="RefSeq" id="NP_001028118.1">
    <property type="nucleotide sequence ID" value="NM_001032946.1"/>
</dbReference>
<dbReference type="SMR" id="Q8HYP4"/>
<dbReference type="FunCoup" id="Q8HYP4">
    <property type="interactions" value="570"/>
</dbReference>
<dbReference type="STRING" id="9544.ENSMMUP00000080372"/>
<dbReference type="PaxDb" id="9544-ENSMMUP00000001256"/>
<dbReference type="GeneID" id="574366"/>
<dbReference type="KEGG" id="mcc:574366"/>
<dbReference type="CTD" id="6368"/>
<dbReference type="eggNOG" id="ENOG502TJX7">
    <property type="taxonomic scope" value="Eukaryota"/>
</dbReference>
<dbReference type="InParanoid" id="Q8HYP4"/>
<dbReference type="OrthoDB" id="9447832at2759"/>
<dbReference type="Proteomes" id="UP000006718">
    <property type="component" value="Unassembled WGS sequence"/>
</dbReference>
<dbReference type="GO" id="GO:0005615">
    <property type="term" value="C:extracellular space"/>
    <property type="evidence" value="ECO:0000318"/>
    <property type="project" value="GO_Central"/>
</dbReference>
<dbReference type="GO" id="GO:0048020">
    <property type="term" value="F:CCR chemokine receptor binding"/>
    <property type="evidence" value="ECO:0000318"/>
    <property type="project" value="GO_Central"/>
</dbReference>
<dbReference type="GO" id="GO:0008009">
    <property type="term" value="F:chemokine activity"/>
    <property type="evidence" value="ECO:0000318"/>
    <property type="project" value="GO_Central"/>
</dbReference>
<dbReference type="GO" id="GO:0008201">
    <property type="term" value="F:heparin binding"/>
    <property type="evidence" value="ECO:0007669"/>
    <property type="project" value="UniProtKB-KW"/>
</dbReference>
<dbReference type="GO" id="GO:0061844">
    <property type="term" value="P:antimicrobial humoral immune response mediated by antimicrobial peptide"/>
    <property type="evidence" value="ECO:0000318"/>
    <property type="project" value="GO_Central"/>
</dbReference>
<dbReference type="GO" id="GO:0060326">
    <property type="term" value="P:cell chemotaxis"/>
    <property type="evidence" value="ECO:0000318"/>
    <property type="project" value="GO_Central"/>
</dbReference>
<dbReference type="GO" id="GO:0070098">
    <property type="term" value="P:chemokine-mediated signaling pathway"/>
    <property type="evidence" value="ECO:0000318"/>
    <property type="project" value="GO_Central"/>
</dbReference>
<dbReference type="GO" id="GO:0006954">
    <property type="term" value="P:inflammatory response"/>
    <property type="evidence" value="ECO:0000318"/>
    <property type="project" value="GO_Central"/>
</dbReference>
<dbReference type="GO" id="GO:0030335">
    <property type="term" value="P:positive regulation of cell migration"/>
    <property type="evidence" value="ECO:0000318"/>
    <property type="project" value="GO_Central"/>
</dbReference>
<dbReference type="CDD" id="cd00272">
    <property type="entry name" value="Chemokine_CC"/>
    <property type="match status" value="1"/>
</dbReference>
<dbReference type="FunFam" id="2.40.50.40:FF:000002">
    <property type="entry name" value="C-C motif chemokine"/>
    <property type="match status" value="1"/>
</dbReference>
<dbReference type="Gene3D" id="2.40.50.40">
    <property type="match status" value="1"/>
</dbReference>
<dbReference type="InterPro" id="IPR039809">
    <property type="entry name" value="Chemokine_b/g/d"/>
</dbReference>
<dbReference type="InterPro" id="IPR000827">
    <property type="entry name" value="Chemokine_CC_CS"/>
</dbReference>
<dbReference type="InterPro" id="IPR001811">
    <property type="entry name" value="Chemokine_IL8-like_dom"/>
</dbReference>
<dbReference type="InterPro" id="IPR036048">
    <property type="entry name" value="Interleukin_8-like_sf"/>
</dbReference>
<dbReference type="PANTHER" id="PTHR12015:SF157">
    <property type="entry name" value="C-C MOTIF CHEMOKINE 23"/>
    <property type="match status" value="1"/>
</dbReference>
<dbReference type="PANTHER" id="PTHR12015">
    <property type="entry name" value="SMALL INDUCIBLE CYTOKINE A"/>
    <property type="match status" value="1"/>
</dbReference>
<dbReference type="Pfam" id="PF00048">
    <property type="entry name" value="IL8"/>
    <property type="match status" value="1"/>
</dbReference>
<dbReference type="SMART" id="SM00199">
    <property type="entry name" value="SCY"/>
    <property type="match status" value="1"/>
</dbReference>
<dbReference type="SUPFAM" id="SSF54117">
    <property type="entry name" value="Interleukin 8-like chemokines"/>
    <property type="match status" value="1"/>
</dbReference>
<dbReference type="PROSITE" id="PS00472">
    <property type="entry name" value="SMALL_CYTOKINES_CC"/>
    <property type="match status" value="1"/>
</dbReference>
<gene>
    <name type="primary">CCL23</name>
</gene>
<reference key="1">
    <citation type="journal article" date="2002" name="Cytokine">
        <title>Molecular cloning and sequencing of 25 different rhesus macaque chemokine cDNAs reveals evolutionary conservation among C, CC, CXC, and CX3C families of chemokines.</title>
        <authorList>
            <person name="Basu S."/>
            <person name="Schaefer T.M."/>
            <person name="Ghosh M."/>
            <person name="Fuller C.L."/>
            <person name="Reinhart T.A."/>
        </authorList>
    </citation>
    <scope>NUCLEOTIDE SEQUENCE [MRNA]</scope>
</reference>
<proteinExistence type="evidence at transcript level"/>
<feature type="signal peptide" evidence="1">
    <location>
        <begin position="1"/>
        <end position="21"/>
    </location>
</feature>
<feature type="chain" id="PRO_0000005230" description="C-C motif chemokine 23">
    <location>
        <begin position="22"/>
        <end position="120"/>
    </location>
</feature>
<feature type="disulfide bond" evidence="1">
    <location>
        <begin position="54"/>
        <end position="78"/>
    </location>
</feature>
<feature type="disulfide bond" evidence="1">
    <location>
        <begin position="55"/>
        <end position="94"/>
    </location>
</feature>
<feature type="disulfide bond" evidence="1">
    <location>
        <begin position="65"/>
        <end position="105"/>
    </location>
</feature>
<comment type="function">
    <text evidence="1">Shows chemotactic activity for monocytes, resting T-lymphocytes, and neutrophils, but not for activated lymphocytes. Inhibits proliferation of myeloid progenitor cells in colony formation assays. This protein can bind heparin. Binds CCR1 (By similarity).</text>
</comment>
<comment type="subcellular location">
    <subcellularLocation>
        <location evidence="1">Secreted</location>
    </subcellularLocation>
</comment>
<comment type="similarity">
    <text evidence="2">Belongs to the intercrine beta (chemokine CC) family.</text>
</comment>
<evidence type="ECO:0000250" key="1"/>
<evidence type="ECO:0000305" key="2"/>
<keyword id="KW-0145">Chemotaxis</keyword>
<keyword id="KW-0202">Cytokine</keyword>
<keyword id="KW-1015">Disulfide bond</keyword>
<keyword id="KW-0358">Heparin-binding</keyword>
<keyword id="KW-0395">Inflammatory response</keyword>
<keyword id="KW-1185">Reference proteome</keyword>
<keyword id="KW-0964">Secreted</keyword>
<keyword id="KW-0732">Signal</keyword>
<name>CCL23_MACMU</name>